<organism>
    <name type="scientific">Dehalococcoides mccartyi (strain CBDB1)</name>
    <dbReference type="NCBI Taxonomy" id="255470"/>
    <lineage>
        <taxon>Bacteria</taxon>
        <taxon>Bacillati</taxon>
        <taxon>Chloroflexota</taxon>
        <taxon>Dehalococcoidia</taxon>
        <taxon>Dehalococcoidales</taxon>
        <taxon>Dehalococcoidaceae</taxon>
        <taxon>Dehalococcoides</taxon>
    </lineage>
</organism>
<name>SYS_DEHMC</name>
<reference key="1">
    <citation type="journal article" date="2005" name="Nat. Biotechnol.">
        <title>Genome sequence of the chlorinated compound-respiring bacterium Dehalococcoides species strain CBDB1.</title>
        <authorList>
            <person name="Kube M."/>
            <person name="Beck A."/>
            <person name="Zinder S.H."/>
            <person name="Kuhl H."/>
            <person name="Reinhardt R."/>
            <person name="Adrian L."/>
        </authorList>
    </citation>
    <scope>NUCLEOTIDE SEQUENCE [LARGE SCALE GENOMIC DNA]</scope>
    <source>
        <strain>CBDB1</strain>
    </source>
</reference>
<gene>
    <name evidence="1" type="primary">serS</name>
    <name type="ordered locus">cbdbA554</name>
</gene>
<evidence type="ECO:0000255" key="1">
    <source>
        <dbReference type="HAMAP-Rule" id="MF_00176"/>
    </source>
</evidence>
<proteinExistence type="inferred from homology"/>
<dbReference type="EC" id="6.1.1.11" evidence="1"/>
<dbReference type="EMBL" id="AJ965256">
    <property type="protein sequence ID" value="CAI82738.1"/>
    <property type="molecule type" value="Genomic_DNA"/>
</dbReference>
<dbReference type="RefSeq" id="WP_011309089.1">
    <property type="nucleotide sequence ID" value="NC_007356.1"/>
</dbReference>
<dbReference type="SMR" id="Q3ZWY0"/>
<dbReference type="KEGG" id="deh:cbdbA554"/>
<dbReference type="HOGENOM" id="CLU_023797_1_1_0"/>
<dbReference type="UniPathway" id="UPA00906">
    <property type="reaction ID" value="UER00895"/>
</dbReference>
<dbReference type="Proteomes" id="UP000000433">
    <property type="component" value="Chromosome"/>
</dbReference>
<dbReference type="GO" id="GO:0005737">
    <property type="term" value="C:cytoplasm"/>
    <property type="evidence" value="ECO:0007669"/>
    <property type="project" value="UniProtKB-SubCell"/>
</dbReference>
<dbReference type="GO" id="GO:0005524">
    <property type="term" value="F:ATP binding"/>
    <property type="evidence" value="ECO:0007669"/>
    <property type="project" value="UniProtKB-UniRule"/>
</dbReference>
<dbReference type="GO" id="GO:0004828">
    <property type="term" value="F:serine-tRNA ligase activity"/>
    <property type="evidence" value="ECO:0007669"/>
    <property type="project" value="UniProtKB-UniRule"/>
</dbReference>
<dbReference type="GO" id="GO:0016260">
    <property type="term" value="P:selenocysteine biosynthetic process"/>
    <property type="evidence" value="ECO:0007669"/>
    <property type="project" value="UniProtKB-UniRule"/>
</dbReference>
<dbReference type="GO" id="GO:0006434">
    <property type="term" value="P:seryl-tRNA aminoacylation"/>
    <property type="evidence" value="ECO:0007669"/>
    <property type="project" value="UniProtKB-UniRule"/>
</dbReference>
<dbReference type="CDD" id="cd00770">
    <property type="entry name" value="SerRS_core"/>
    <property type="match status" value="1"/>
</dbReference>
<dbReference type="Gene3D" id="3.30.930.10">
    <property type="entry name" value="Bira Bifunctional Protein, Domain 2"/>
    <property type="match status" value="1"/>
</dbReference>
<dbReference type="Gene3D" id="1.10.287.40">
    <property type="entry name" value="Serine-tRNA synthetase, tRNA binding domain"/>
    <property type="match status" value="1"/>
</dbReference>
<dbReference type="HAMAP" id="MF_00176">
    <property type="entry name" value="Ser_tRNA_synth_type1"/>
    <property type="match status" value="1"/>
</dbReference>
<dbReference type="InterPro" id="IPR002314">
    <property type="entry name" value="aa-tRNA-synt_IIb"/>
</dbReference>
<dbReference type="InterPro" id="IPR006195">
    <property type="entry name" value="aa-tRNA-synth_II"/>
</dbReference>
<dbReference type="InterPro" id="IPR045864">
    <property type="entry name" value="aa-tRNA-synth_II/BPL/LPL"/>
</dbReference>
<dbReference type="InterPro" id="IPR002317">
    <property type="entry name" value="Ser-tRNA-ligase_type_1"/>
</dbReference>
<dbReference type="InterPro" id="IPR015866">
    <property type="entry name" value="Ser-tRNA-synth_1_N"/>
</dbReference>
<dbReference type="InterPro" id="IPR042103">
    <property type="entry name" value="SerRS_1_N_sf"/>
</dbReference>
<dbReference type="InterPro" id="IPR033729">
    <property type="entry name" value="SerRS_core"/>
</dbReference>
<dbReference type="InterPro" id="IPR010978">
    <property type="entry name" value="tRNA-bd_arm"/>
</dbReference>
<dbReference type="NCBIfam" id="TIGR00414">
    <property type="entry name" value="serS"/>
    <property type="match status" value="1"/>
</dbReference>
<dbReference type="PANTHER" id="PTHR43697:SF1">
    <property type="entry name" value="SERINE--TRNA LIGASE"/>
    <property type="match status" value="1"/>
</dbReference>
<dbReference type="PANTHER" id="PTHR43697">
    <property type="entry name" value="SERYL-TRNA SYNTHETASE"/>
    <property type="match status" value="1"/>
</dbReference>
<dbReference type="Pfam" id="PF02403">
    <property type="entry name" value="Seryl_tRNA_N"/>
    <property type="match status" value="1"/>
</dbReference>
<dbReference type="Pfam" id="PF00587">
    <property type="entry name" value="tRNA-synt_2b"/>
    <property type="match status" value="1"/>
</dbReference>
<dbReference type="PIRSF" id="PIRSF001529">
    <property type="entry name" value="Ser-tRNA-synth_IIa"/>
    <property type="match status" value="1"/>
</dbReference>
<dbReference type="PRINTS" id="PR00981">
    <property type="entry name" value="TRNASYNTHSER"/>
</dbReference>
<dbReference type="SUPFAM" id="SSF55681">
    <property type="entry name" value="Class II aaRS and biotin synthetases"/>
    <property type="match status" value="1"/>
</dbReference>
<dbReference type="SUPFAM" id="SSF46589">
    <property type="entry name" value="tRNA-binding arm"/>
    <property type="match status" value="1"/>
</dbReference>
<dbReference type="PROSITE" id="PS50862">
    <property type="entry name" value="AA_TRNA_LIGASE_II"/>
    <property type="match status" value="1"/>
</dbReference>
<keyword id="KW-0030">Aminoacyl-tRNA synthetase</keyword>
<keyword id="KW-0067">ATP-binding</keyword>
<keyword id="KW-0963">Cytoplasm</keyword>
<keyword id="KW-0436">Ligase</keyword>
<keyword id="KW-0547">Nucleotide-binding</keyword>
<keyword id="KW-0648">Protein biosynthesis</keyword>
<sequence length="413" mass="47474">MLDLKFIRENPELVRKAVADRNTDAPIDEILELDNSRRNLTQELDNLRAKRKIMAKQRDETAIEEGRVLRGQISTLESELSQVDEKLTDRLLRVPNIPDPSVPVGKDESENVVLYYRGEKRNFSFTPKPHWELGEALDIIDFDRGIKLSGSRFYILKGAGARLQRALIAFMLDLHTRKHDYTEIYPPYMIKRECLVASGNLPKFADNLYHDAEEDYWWVPTAEAPLTNLHRDEILSAEQLPIHYVAYTACFRREKMSAGKDVRGIKRLHQFDKVELYKYCKPEDSFAELEKMVADAEEIADALKIPYRLKQLVTADISFGSAKSYDIEMYSPGVDEWLEVSSCSNCTDFQGRRANVRFRRTSEAKPEFVHTLNGSGLALPRVMISVIENYQQPDGSIVIPEVLRPFMGVDVIR</sequence>
<accession>Q3ZWY0</accession>
<protein>
    <recommendedName>
        <fullName evidence="1">Serine--tRNA ligase</fullName>
        <ecNumber evidence="1">6.1.1.11</ecNumber>
    </recommendedName>
    <alternativeName>
        <fullName evidence="1">Seryl-tRNA synthetase</fullName>
        <shortName evidence="1">SerRS</shortName>
    </alternativeName>
    <alternativeName>
        <fullName evidence="1">Seryl-tRNA(Ser/Sec) synthetase</fullName>
    </alternativeName>
</protein>
<comment type="function">
    <text evidence="1">Catalyzes the attachment of serine to tRNA(Ser). Is also able to aminoacylate tRNA(Sec) with serine, to form the misacylated tRNA L-seryl-tRNA(Sec), which will be further converted into selenocysteinyl-tRNA(Sec).</text>
</comment>
<comment type="catalytic activity">
    <reaction evidence="1">
        <text>tRNA(Ser) + L-serine + ATP = L-seryl-tRNA(Ser) + AMP + diphosphate + H(+)</text>
        <dbReference type="Rhea" id="RHEA:12292"/>
        <dbReference type="Rhea" id="RHEA-COMP:9669"/>
        <dbReference type="Rhea" id="RHEA-COMP:9703"/>
        <dbReference type="ChEBI" id="CHEBI:15378"/>
        <dbReference type="ChEBI" id="CHEBI:30616"/>
        <dbReference type="ChEBI" id="CHEBI:33019"/>
        <dbReference type="ChEBI" id="CHEBI:33384"/>
        <dbReference type="ChEBI" id="CHEBI:78442"/>
        <dbReference type="ChEBI" id="CHEBI:78533"/>
        <dbReference type="ChEBI" id="CHEBI:456215"/>
        <dbReference type="EC" id="6.1.1.11"/>
    </reaction>
</comment>
<comment type="catalytic activity">
    <reaction evidence="1">
        <text>tRNA(Sec) + L-serine + ATP = L-seryl-tRNA(Sec) + AMP + diphosphate + H(+)</text>
        <dbReference type="Rhea" id="RHEA:42580"/>
        <dbReference type="Rhea" id="RHEA-COMP:9742"/>
        <dbReference type="Rhea" id="RHEA-COMP:10128"/>
        <dbReference type="ChEBI" id="CHEBI:15378"/>
        <dbReference type="ChEBI" id="CHEBI:30616"/>
        <dbReference type="ChEBI" id="CHEBI:33019"/>
        <dbReference type="ChEBI" id="CHEBI:33384"/>
        <dbReference type="ChEBI" id="CHEBI:78442"/>
        <dbReference type="ChEBI" id="CHEBI:78533"/>
        <dbReference type="ChEBI" id="CHEBI:456215"/>
        <dbReference type="EC" id="6.1.1.11"/>
    </reaction>
</comment>
<comment type="pathway">
    <text evidence="1">Aminoacyl-tRNA biosynthesis; selenocysteinyl-tRNA(Sec) biosynthesis; L-seryl-tRNA(Sec) from L-serine and tRNA(Sec): step 1/1.</text>
</comment>
<comment type="subunit">
    <text evidence="1">Homodimer. The tRNA molecule binds across the dimer.</text>
</comment>
<comment type="subcellular location">
    <subcellularLocation>
        <location evidence="1">Cytoplasm</location>
    </subcellularLocation>
</comment>
<comment type="domain">
    <text evidence="1">Consists of two distinct domains, a catalytic core and a N-terminal extension that is involved in tRNA binding.</text>
</comment>
<comment type="similarity">
    <text evidence="1">Belongs to the class-II aminoacyl-tRNA synthetase family. Type-1 seryl-tRNA synthetase subfamily.</text>
</comment>
<feature type="chain" id="PRO_1000019667" description="Serine--tRNA ligase">
    <location>
        <begin position="1"/>
        <end position="413"/>
    </location>
</feature>
<feature type="binding site" evidence="1">
    <location>
        <begin position="221"/>
        <end position="223"/>
    </location>
    <ligand>
        <name>L-serine</name>
        <dbReference type="ChEBI" id="CHEBI:33384"/>
    </ligand>
</feature>
<feature type="binding site" evidence="1">
    <location>
        <begin position="252"/>
        <end position="254"/>
    </location>
    <ligand>
        <name>ATP</name>
        <dbReference type="ChEBI" id="CHEBI:30616"/>
    </ligand>
</feature>
<feature type="binding site" evidence="1">
    <location>
        <position position="275"/>
    </location>
    <ligand>
        <name>L-serine</name>
        <dbReference type="ChEBI" id="CHEBI:33384"/>
    </ligand>
</feature>
<feature type="binding site" evidence="1">
    <location>
        <begin position="339"/>
        <end position="342"/>
    </location>
    <ligand>
        <name>ATP</name>
        <dbReference type="ChEBI" id="CHEBI:30616"/>
    </ligand>
</feature>
<feature type="binding site" evidence="1">
    <location>
        <position position="375"/>
    </location>
    <ligand>
        <name>L-serine</name>
        <dbReference type="ChEBI" id="CHEBI:33384"/>
    </ligand>
</feature>